<evidence type="ECO:0000255" key="1">
    <source>
        <dbReference type="HAMAP-Rule" id="MF_00163"/>
    </source>
</evidence>
<accession>B0S139</accession>
<name>DEF_FINM2</name>
<dbReference type="EC" id="3.5.1.88" evidence="1"/>
<dbReference type="EMBL" id="AP008971">
    <property type="protein sequence ID" value="BAG08079.1"/>
    <property type="molecule type" value="Genomic_DNA"/>
</dbReference>
<dbReference type="RefSeq" id="WP_012290551.1">
    <property type="nucleotide sequence ID" value="NC_010376.1"/>
</dbReference>
<dbReference type="SMR" id="B0S139"/>
<dbReference type="STRING" id="334413.FMG_0661"/>
<dbReference type="KEGG" id="fma:FMG_0661"/>
<dbReference type="eggNOG" id="COG0242">
    <property type="taxonomic scope" value="Bacteria"/>
</dbReference>
<dbReference type="HOGENOM" id="CLU_061901_4_2_9"/>
<dbReference type="Proteomes" id="UP000001319">
    <property type="component" value="Chromosome"/>
</dbReference>
<dbReference type="GO" id="GO:0046872">
    <property type="term" value="F:metal ion binding"/>
    <property type="evidence" value="ECO:0007669"/>
    <property type="project" value="UniProtKB-KW"/>
</dbReference>
<dbReference type="GO" id="GO:0042586">
    <property type="term" value="F:peptide deformylase activity"/>
    <property type="evidence" value="ECO:0007669"/>
    <property type="project" value="UniProtKB-UniRule"/>
</dbReference>
<dbReference type="GO" id="GO:0043686">
    <property type="term" value="P:co-translational protein modification"/>
    <property type="evidence" value="ECO:0007669"/>
    <property type="project" value="TreeGrafter"/>
</dbReference>
<dbReference type="GO" id="GO:0006412">
    <property type="term" value="P:translation"/>
    <property type="evidence" value="ECO:0007669"/>
    <property type="project" value="UniProtKB-UniRule"/>
</dbReference>
<dbReference type="CDD" id="cd00487">
    <property type="entry name" value="Pep_deformylase"/>
    <property type="match status" value="1"/>
</dbReference>
<dbReference type="FunFam" id="3.90.45.10:FF:000005">
    <property type="entry name" value="Peptide deformylase"/>
    <property type="match status" value="1"/>
</dbReference>
<dbReference type="Gene3D" id="3.90.45.10">
    <property type="entry name" value="Peptide deformylase"/>
    <property type="match status" value="1"/>
</dbReference>
<dbReference type="HAMAP" id="MF_00163">
    <property type="entry name" value="Pep_deformylase"/>
    <property type="match status" value="1"/>
</dbReference>
<dbReference type="InterPro" id="IPR023635">
    <property type="entry name" value="Peptide_deformylase"/>
</dbReference>
<dbReference type="InterPro" id="IPR036821">
    <property type="entry name" value="Peptide_deformylase_sf"/>
</dbReference>
<dbReference type="NCBIfam" id="TIGR00079">
    <property type="entry name" value="pept_deformyl"/>
    <property type="match status" value="1"/>
</dbReference>
<dbReference type="NCBIfam" id="NF001159">
    <property type="entry name" value="PRK00150.1-3"/>
    <property type="match status" value="1"/>
</dbReference>
<dbReference type="PANTHER" id="PTHR10458">
    <property type="entry name" value="PEPTIDE DEFORMYLASE"/>
    <property type="match status" value="1"/>
</dbReference>
<dbReference type="PANTHER" id="PTHR10458:SF22">
    <property type="entry name" value="PEPTIDE DEFORMYLASE"/>
    <property type="match status" value="1"/>
</dbReference>
<dbReference type="Pfam" id="PF01327">
    <property type="entry name" value="Pep_deformylase"/>
    <property type="match status" value="1"/>
</dbReference>
<dbReference type="PIRSF" id="PIRSF004749">
    <property type="entry name" value="Pep_def"/>
    <property type="match status" value="1"/>
</dbReference>
<dbReference type="PRINTS" id="PR01576">
    <property type="entry name" value="PDEFORMYLASE"/>
</dbReference>
<dbReference type="SUPFAM" id="SSF56420">
    <property type="entry name" value="Peptide deformylase"/>
    <property type="match status" value="1"/>
</dbReference>
<feature type="chain" id="PRO_1000097311" description="Peptide deformylase">
    <location>
        <begin position="1"/>
        <end position="162"/>
    </location>
</feature>
<feature type="active site" evidence="1">
    <location>
        <position position="134"/>
    </location>
</feature>
<feature type="binding site" evidence="1">
    <location>
        <position position="91"/>
    </location>
    <ligand>
        <name>Fe cation</name>
        <dbReference type="ChEBI" id="CHEBI:24875"/>
    </ligand>
</feature>
<feature type="binding site" evidence="1">
    <location>
        <position position="133"/>
    </location>
    <ligand>
        <name>Fe cation</name>
        <dbReference type="ChEBI" id="CHEBI:24875"/>
    </ligand>
</feature>
<feature type="binding site" evidence="1">
    <location>
        <position position="137"/>
    </location>
    <ligand>
        <name>Fe cation</name>
        <dbReference type="ChEBI" id="CHEBI:24875"/>
    </ligand>
</feature>
<gene>
    <name evidence="1" type="primary">def</name>
    <name type="ordered locus">FMG_0661</name>
</gene>
<reference key="1">
    <citation type="journal article" date="2008" name="DNA Res.">
        <title>Complete genome sequence of Finegoldia magna, an anaerobic opportunistic pathogen.</title>
        <authorList>
            <person name="Goto T."/>
            <person name="Yamashita A."/>
            <person name="Hirakawa H."/>
            <person name="Matsutani M."/>
            <person name="Todo K."/>
            <person name="Ohshima K."/>
            <person name="Toh H."/>
            <person name="Miyamoto K."/>
            <person name="Kuhara S."/>
            <person name="Hattori M."/>
            <person name="Shimizu T."/>
            <person name="Akimoto S."/>
        </authorList>
    </citation>
    <scope>NUCLEOTIDE SEQUENCE [LARGE SCALE GENOMIC DNA]</scope>
    <source>
        <strain>ATCC 29328 / DSM 20472 / WAL 2508</strain>
    </source>
</reference>
<protein>
    <recommendedName>
        <fullName evidence="1">Peptide deformylase</fullName>
        <shortName evidence="1">PDF</shortName>
        <ecNumber evidence="1">3.5.1.88</ecNumber>
    </recommendedName>
    <alternativeName>
        <fullName evidence="1">Polypeptide deformylase</fullName>
    </alternativeName>
</protein>
<keyword id="KW-0378">Hydrolase</keyword>
<keyword id="KW-0408">Iron</keyword>
<keyword id="KW-0479">Metal-binding</keyword>
<keyword id="KW-0648">Protein biosynthesis</keyword>
<keyword id="KW-1185">Reference proteome</keyword>
<proteinExistence type="inferred from homology"/>
<comment type="function">
    <text evidence="1">Removes the formyl group from the N-terminal Met of newly synthesized proteins. Requires at least a dipeptide for an efficient rate of reaction. N-terminal L-methionine is a prerequisite for activity but the enzyme has broad specificity at other positions.</text>
</comment>
<comment type="catalytic activity">
    <reaction evidence="1">
        <text>N-terminal N-formyl-L-methionyl-[peptide] + H2O = N-terminal L-methionyl-[peptide] + formate</text>
        <dbReference type="Rhea" id="RHEA:24420"/>
        <dbReference type="Rhea" id="RHEA-COMP:10639"/>
        <dbReference type="Rhea" id="RHEA-COMP:10640"/>
        <dbReference type="ChEBI" id="CHEBI:15377"/>
        <dbReference type="ChEBI" id="CHEBI:15740"/>
        <dbReference type="ChEBI" id="CHEBI:49298"/>
        <dbReference type="ChEBI" id="CHEBI:64731"/>
        <dbReference type="EC" id="3.5.1.88"/>
    </reaction>
</comment>
<comment type="cofactor">
    <cofactor evidence="1">
        <name>Fe(2+)</name>
        <dbReference type="ChEBI" id="CHEBI:29033"/>
    </cofactor>
    <text evidence="1">Binds 1 Fe(2+) ion.</text>
</comment>
<comment type="similarity">
    <text evidence="1">Belongs to the polypeptide deformylase family.</text>
</comment>
<organism>
    <name type="scientific">Finegoldia magna (strain ATCC 29328 / DSM 20472 / WAL 2508)</name>
    <name type="common">Peptostreptococcus magnus</name>
    <dbReference type="NCBI Taxonomy" id="334413"/>
    <lineage>
        <taxon>Bacteria</taxon>
        <taxon>Bacillati</taxon>
        <taxon>Bacillota</taxon>
        <taxon>Tissierellia</taxon>
        <taxon>Tissierellales</taxon>
        <taxon>Peptoniphilaceae</taxon>
        <taxon>Finegoldia</taxon>
    </lineage>
</organism>
<sequence>MALRQIRLENDPILRKKSREVEKIDDRIKQIVEDMFETMYENKGIGLACVQVGMLKRIVVIDMQDEDGKMVLINPKIIEKSEEKQINIEGCLSVPGKNGYVERPKTVVVEYTDLNGNTQRVMGTDYKAHCFCHELDHLDGVLYTDKVLNLSEEEVERLNNEK</sequence>